<protein>
    <recommendedName>
        <fullName>Photosystem I reaction center subunit VIII</fullName>
        <shortName>PSI-I</shortName>
    </recommendedName>
</protein>
<dbReference type="EMBL" id="Z67753">
    <property type="protein sequence ID" value="CAA91722.1"/>
    <property type="molecule type" value="Genomic_DNA"/>
</dbReference>
<dbReference type="PIR" id="S78349">
    <property type="entry name" value="S78349"/>
</dbReference>
<dbReference type="RefSeq" id="NP_043690.1">
    <property type="nucleotide sequence ID" value="NC_001713.1"/>
</dbReference>
<dbReference type="SMR" id="P49484"/>
<dbReference type="GeneID" id="801771"/>
<dbReference type="GO" id="GO:0009535">
    <property type="term" value="C:chloroplast thylakoid membrane"/>
    <property type="evidence" value="ECO:0007669"/>
    <property type="project" value="UniProtKB-SubCell"/>
</dbReference>
<dbReference type="GO" id="GO:0009522">
    <property type="term" value="C:photosystem I"/>
    <property type="evidence" value="ECO:0007669"/>
    <property type="project" value="UniProtKB-KW"/>
</dbReference>
<dbReference type="GO" id="GO:0015979">
    <property type="term" value="P:photosynthesis"/>
    <property type="evidence" value="ECO:0007669"/>
    <property type="project" value="UniProtKB-UniRule"/>
</dbReference>
<dbReference type="HAMAP" id="MF_00431">
    <property type="entry name" value="PSI_PsaI"/>
    <property type="match status" value="1"/>
</dbReference>
<dbReference type="InterPro" id="IPR001302">
    <property type="entry name" value="PSI_PsaI"/>
</dbReference>
<dbReference type="InterPro" id="IPR036357">
    <property type="entry name" value="PSI_PsaI_sf"/>
</dbReference>
<dbReference type="NCBIfam" id="TIGR03052">
    <property type="entry name" value="PS_I_psaI"/>
    <property type="match status" value="1"/>
</dbReference>
<dbReference type="PANTHER" id="PTHR35775">
    <property type="match status" value="1"/>
</dbReference>
<dbReference type="PANTHER" id="PTHR35775:SF2">
    <property type="entry name" value="PHOTOSYSTEM I REACTION CENTER SUBUNIT VIII"/>
    <property type="match status" value="1"/>
</dbReference>
<dbReference type="Pfam" id="PF00796">
    <property type="entry name" value="PSI_8"/>
    <property type="match status" value="1"/>
</dbReference>
<dbReference type="SUPFAM" id="SSF81540">
    <property type="entry name" value="Subunit VIII of photosystem I reaction centre, PsaI"/>
    <property type="match status" value="1"/>
</dbReference>
<sequence length="38" mass="4093">MAAAFLPSILVPLVGLIFPAFSMALFFIYISADDITES</sequence>
<proteinExistence type="inferred from homology"/>
<gene>
    <name type="primary">psaI</name>
</gene>
<evidence type="ECO:0000250" key="1"/>
<evidence type="ECO:0000255" key="2"/>
<evidence type="ECO:0000305" key="3"/>
<keyword id="KW-0150">Chloroplast</keyword>
<keyword id="KW-0472">Membrane</keyword>
<keyword id="KW-0602">Photosynthesis</keyword>
<keyword id="KW-0603">Photosystem I</keyword>
<keyword id="KW-0934">Plastid</keyword>
<keyword id="KW-0793">Thylakoid</keyword>
<keyword id="KW-0812">Transmembrane</keyword>
<keyword id="KW-1133">Transmembrane helix</keyword>
<accession>P49484</accession>
<geneLocation type="chloroplast"/>
<reference key="1">
    <citation type="journal article" date="1995" name="Plant Mol. Biol. Rep.">
        <title>The chloroplast genome of a chlorophyll a+c-containing alga, Odontella sinensis.</title>
        <authorList>
            <person name="Kowallik K.V."/>
            <person name="Stoebe B."/>
            <person name="Schaffran I."/>
            <person name="Kroth-Pancic P."/>
            <person name="Freier U."/>
        </authorList>
    </citation>
    <scope>NUCLEOTIDE SEQUENCE [LARGE SCALE GENOMIC DNA]</scope>
</reference>
<name>PSAI_TRICV</name>
<organism>
    <name type="scientific">Trieres chinensis</name>
    <name type="common">Marine centric diatom</name>
    <name type="synonym">Odontella sinensis</name>
    <dbReference type="NCBI Taxonomy" id="1514140"/>
    <lineage>
        <taxon>Eukaryota</taxon>
        <taxon>Sar</taxon>
        <taxon>Stramenopiles</taxon>
        <taxon>Ochrophyta</taxon>
        <taxon>Bacillariophyta</taxon>
        <taxon>Mediophyceae</taxon>
        <taxon>Biddulphiophycidae</taxon>
        <taxon>Eupodiscales</taxon>
        <taxon>Parodontellaceae</taxon>
        <taxon>Trieres</taxon>
    </lineage>
</organism>
<feature type="chain" id="PRO_0000194663" description="Photosystem I reaction center subunit VIII">
    <location>
        <begin position="1"/>
        <end position="38"/>
    </location>
</feature>
<feature type="transmembrane region" description="Helical" evidence="2">
    <location>
        <begin position="10"/>
        <end position="30"/>
    </location>
</feature>
<comment type="function">
    <text evidence="1">May help in the organization of the PsaL subunit.</text>
</comment>
<comment type="subcellular location">
    <subcellularLocation>
        <location evidence="1">Plastid</location>
        <location evidence="1">Chloroplast thylakoid membrane</location>
        <topology evidence="1">Single-pass membrane protein</topology>
    </subcellularLocation>
</comment>
<comment type="similarity">
    <text evidence="3">Belongs to the PsaI family.</text>
</comment>